<evidence type="ECO:0000255" key="1">
    <source>
        <dbReference type="HAMAP-Rule" id="MF_04072"/>
    </source>
</evidence>
<evidence type="ECO:0000305" key="2"/>
<evidence type="ECO:0007829" key="3">
    <source>
        <dbReference type="PDB" id="4NRJ"/>
    </source>
</evidence>
<evidence type="ECO:0007829" key="4">
    <source>
        <dbReference type="PDB" id="4NRL"/>
    </source>
</evidence>
<proteinExistence type="evidence at protein level"/>
<name>HEMA_INBLE</name>
<gene>
    <name evidence="1" type="primary">HA</name>
</gene>
<keyword id="KW-0002">3D-structure</keyword>
<keyword id="KW-1015">Disulfide bond</keyword>
<keyword id="KW-1170">Fusion of virus membrane with host endosomal membrane</keyword>
<keyword id="KW-1168">Fusion of virus membrane with host membrane</keyword>
<keyword id="KW-0325">Glycoprotein</keyword>
<keyword id="KW-0348">Hemagglutinin</keyword>
<keyword id="KW-1032">Host cell membrane</keyword>
<keyword id="KW-1043">Host membrane</keyword>
<keyword id="KW-0945">Host-virus interaction</keyword>
<keyword id="KW-0449">Lipoprotein</keyword>
<keyword id="KW-0472">Membrane</keyword>
<keyword id="KW-0564">Palmitate</keyword>
<keyword id="KW-1185">Reference proteome</keyword>
<keyword id="KW-0732">Signal</keyword>
<keyword id="KW-0812">Transmembrane</keyword>
<keyword id="KW-1133">Transmembrane helix</keyword>
<keyword id="KW-1161">Viral attachment to host cell</keyword>
<keyword id="KW-0261">Viral envelope protein</keyword>
<keyword id="KW-1162">Viral penetration into host cytoplasm</keyword>
<keyword id="KW-0946">Virion</keyword>
<keyword id="KW-1164">Virus endocytosis by host</keyword>
<keyword id="KW-1160">Virus entry into host cell</keyword>
<dbReference type="EMBL" id="K00423">
    <property type="protein sequence ID" value="AAA43716.1"/>
    <property type="molecule type" value="Genomic_RNA"/>
</dbReference>
<dbReference type="EMBL" id="J02093">
    <property type="protein sequence ID" value="AAA43700.1"/>
    <property type="status" value="ALT_SEQ"/>
    <property type="molecule type" value="Genomic_RNA"/>
</dbReference>
<dbReference type="PIR" id="C93986">
    <property type="entry name" value="HMIVB"/>
</dbReference>
<dbReference type="RefSeq" id="NP_056660.1">
    <property type="nucleotide sequence ID" value="NC_002207.1"/>
</dbReference>
<dbReference type="PDB" id="4NRJ">
    <property type="method" value="X-ray"/>
    <property type="resolution" value="2.53 A"/>
    <property type="chains" value="A/C/E=16-361, B/D/F=362-537"/>
</dbReference>
<dbReference type="PDB" id="4NRK">
    <property type="method" value="X-ray"/>
    <property type="resolution" value="2.63 A"/>
    <property type="chains" value="A/C/E=16-361, B/D/F=362-537"/>
</dbReference>
<dbReference type="PDB" id="4NRL">
    <property type="method" value="X-ray"/>
    <property type="resolution" value="2.72 A"/>
    <property type="chains" value="A/C/E=16-361, B/D/F=362-537"/>
</dbReference>
<dbReference type="PDBsum" id="4NRJ"/>
<dbReference type="PDBsum" id="4NRK"/>
<dbReference type="PDBsum" id="4NRL"/>
<dbReference type="SMR" id="P03460"/>
<dbReference type="GlyCosmos" id="P03460">
    <property type="glycosylation" value="9 sites, No reported glycans"/>
</dbReference>
<dbReference type="GeneID" id="956538"/>
<dbReference type="KEGG" id="vg:956538"/>
<dbReference type="OrthoDB" id="2813at10239"/>
<dbReference type="EvolutionaryTrace" id="P03460"/>
<dbReference type="Proteomes" id="UP000008158">
    <property type="component" value="Genome"/>
</dbReference>
<dbReference type="GO" id="GO:0020002">
    <property type="term" value="C:host cell plasma membrane"/>
    <property type="evidence" value="ECO:0007669"/>
    <property type="project" value="UniProtKB-SubCell"/>
</dbReference>
<dbReference type="GO" id="GO:0016020">
    <property type="term" value="C:membrane"/>
    <property type="evidence" value="ECO:0007669"/>
    <property type="project" value="UniProtKB-UniRule"/>
</dbReference>
<dbReference type="GO" id="GO:0019031">
    <property type="term" value="C:viral envelope"/>
    <property type="evidence" value="ECO:0007669"/>
    <property type="project" value="UniProtKB-UniRule"/>
</dbReference>
<dbReference type="GO" id="GO:0055036">
    <property type="term" value="C:virion membrane"/>
    <property type="evidence" value="ECO:0007669"/>
    <property type="project" value="UniProtKB-SubCell"/>
</dbReference>
<dbReference type="GO" id="GO:0046789">
    <property type="term" value="F:host cell surface receptor binding"/>
    <property type="evidence" value="ECO:0007669"/>
    <property type="project" value="UniProtKB-UniRule"/>
</dbReference>
<dbReference type="GO" id="GO:0075509">
    <property type="term" value="P:endocytosis involved in viral entry into host cell"/>
    <property type="evidence" value="ECO:0007669"/>
    <property type="project" value="UniProtKB-KW"/>
</dbReference>
<dbReference type="GO" id="GO:0039654">
    <property type="term" value="P:fusion of virus membrane with host endosome membrane"/>
    <property type="evidence" value="ECO:0007669"/>
    <property type="project" value="UniProtKB-UniRule"/>
</dbReference>
<dbReference type="GO" id="GO:0019064">
    <property type="term" value="P:fusion of virus membrane with host plasma membrane"/>
    <property type="evidence" value="ECO:0007669"/>
    <property type="project" value="InterPro"/>
</dbReference>
<dbReference type="GO" id="GO:0046761">
    <property type="term" value="P:viral budding from plasma membrane"/>
    <property type="evidence" value="ECO:0007669"/>
    <property type="project" value="UniProtKB-UniRule"/>
</dbReference>
<dbReference type="GO" id="GO:0019062">
    <property type="term" value="P:virion attachment to host cell"/>
    <property type="evidence" value="ECO:0007669"/>
    <property type="project" value="UniProtKB-KW"/>
</dbReference>
<dbReference type="Gene3D" id="3.90.20.10">
    <property type="match status" value="1"/>
</dbReference>
<dbReference type="Gene3D" id="3.90.209.20">
    <property type="match status" value="1"/>
</dbReference>
<dbReference type="Gene3D" id="2.10.77.10">
    <property type="entry name" value="Hemagglutinin Chain A, Domain 2"/>
    <property type="match status" value="1"/>
</dbReference>
<dbReference type="HAMAP" id="MF_04072">
    <property type="entry name" value="INFV_HEMA"/>
    <property type="match status" value="1"/>
</dbReference>
<dbReference type="InterPro" id="IPR008980">
    <property type="entry name" value="Capsid_hemagglutn"/>
</dbReference>
<dbReference type="InterPro" id="IPR013828">
    <property type="entry name" value="Hemagglutn_HA1_a/b_dom_sf"/>
</dbReference>
<dbReference type="InterPro" id="IPR001364">
    <property type="entry name" value="Hemagglutn_influenz_A/B"/>
</dbReference>
<dbReference type="InterPro" id="IPR000386">
    <property type="entry name" value="Hemagglutn_influenz_B"/>
</dbReference>
<dbReference type="Pfam" id="PF00509">
    <property type="entry name" value="Hemagglutinin"/>
    <property type="match status" value="1"/>
</dbReference>
<dbReference type="PRINTS" id="PR00329">
    <property type="entry name" value="HEMAGGLUTN12"/>
</dbReference>
<dbReference type="PRINTS" id="PR00331">
    <property type="entry name" value="HEMAGGLUTN2"/>
</dbReference>
<dbReference type="SUPFAM" id="SSF58064">
    <property type="entry name" value="Influenza hemagglutinin (stalk)"/>
    <property type="match status" value="1"/>
</dbReference>
<dbReference type="SUPFAM" id="SSF49818">
    <property type="entry name" value="Viral protein domain"/>
    <property type="match status" value="1"/>
</dbReference>
<organism>
    <name type="scientific">Influenza B virus (strain B/Lee/1940)</name>
    <dbReference type="NCBI Taxonomy" id="518987"/>
    <lineage>
        <taxon>Viruses</taxon>
        <taxon>Riboviria</taxon>
        <taxon>Orthornavirae</taxon>
        <taxon>Negarnaviricota</taxon>
        <taxon>Polyploviricotina</taxon>
        <taxon>Insthoviricetes</taxon>
        <taxon>Articulavirales</taxon>
        <taxon>Orthomyxoviridae</taxon>
        <taxon>Betainfluenzavirus</taxon>
        <taxon>Betainfluenzavirus influenzae</taxon>
        <taxon>Influenza B virus</taxon>
    </lineage>
</organism>
<feature type="signal peptide" evidence="1">
    <location>
        <begin position="1"/>
        <end position="15"/>
    </location>
</feature>
<feature type="chain" id="PRO_0000440547" description="Hemagglutinin" evidence="1">
    <location>
        <begin position="16"/>
        <end position="584"/>
    </location>
</feature>
<feature type="chain" id="PRO_0000039114" description="Hemagglutinin HA1 chain" evidence="1">
    <location>
        <begin position="16"/>
        <end position="360"/>
    </location>
</feature>
<feature type="chain" id="PRO_0000039115" description="Hemagglutinin HA2 chain" evidence="1">
    <location>
        <begin position="362"/>
        <end position="584"/>
    </location>
</feature>
<feature type="topological domain" description="Extracellular" evidence="1">
    <location>
        <begin position="16"/>
        <end position="552"/>
    </location>
</feature>
<feature type="transmembrane region" description="Helical" evidence="1">
    <location>
        <begin position="553"/>
        <end position="573"/>
    </location>
</feature>
<feature type="topological domain" description="Cytoplasmic" evidence="1">
    <location>
        <begin position="574"/>
        <end position="584"/>
    </location>
</feature>
<feature type="site" description="Cleavage; by host" evidence="1">
    <location>
        <begin position="361"/>
        <end position="362"/>
    </location>
</feature>
<feature type="lipid moiety-binding region" description="S-palmitoyl cysteine; by host" evidence="1">
    <location>
        <position position="580"/>
    </location>
</feature>
<feature type="lipid moiety-binding region" description="S-palmitoyl cysteine; by host" evidence="1">
    <location>
        <position position="583"/>
    </location>
</feature>
<feature type="glycosylation site" description="N-linked (GlcNAc...) asparagine; by host" evidence="1">
    <location>
        <position position="40"/>
    </location>
</feature>
<feature type="glycosylation site" description="N-linked (GlcNAc...) asparagine; by host" evidence="1">
    <location>
        <position position="74"/>
    </location>
</feature>
<feature type="glycosylation site" description="N-linked (GlcNAc...) asparagine; by host" evidence="1">
    <location>
        <position position="180"/>
    </location>
</feature>
<feature type="glycosylation site" description="N-linked (GlcNAc...) asparagine; by host" evidence="1">
    <location>
        <position position="247"/>
    </location>
</feature>
<feature type="glycosylation site" description="N-linked (GlcNAc...) asparagine; by host" evidence="1">
    <location>
        <position position="318"/>
    </location>
</feature>
<feature type="glycosylation site" description="N-linked (GlcNAc...) asparagine; by host" evidence="1">
    <location>
        <position position="347"/>
    </location>
</feature>
<feature type="glycosylation site" description="N-linked (GlcNAc...) asparagine; by host" evidence="1">
    <location>
        <position position="506"/>
    </location>
</feature>
<feature type="glycosylation site" description="N-linked (GlcNAc...) asparagine; by host" evidence="1">
    <location>
        <position position="532"/>
    </location>
</feature>
<feature type="glycosylation site" description="N-linked (GlcNAc...) asparagine; by host" evidence="1">
    <location>
        <position position="545"/>
    </location>
</feature>
<feature type="disulfide bond" description="Interchain (between HA1 and HA2 chains)" evidence="1">
    <location>
        <begin position="19"/>
        <end position="498"/>
    </location>
</feature>
<feature type="disulfide bond" evidence="1">
    <location>
        <begin position="75"/>
        <end position="87"/>
    </location>
</feature>
<feature type="disulfide bond" evidence="1">
    <location>
        <begin position="109"/>
        <end position="158"/>
    </location>
</feature>
<feature type="disulfide bond" evidence="1">
    <location>
        <begin position="505"/>
        <end position="509"/>
    </location>
</feature>
<feature type="strand" evidence="3">
    <location>
        <begin position="17"/>
        <end position="23"/>
    </location>
</feature>
<feature type="strand" evidence="3">
    <location>
        <begin position="29"/>
        <end position="32"/>
    </location>
</feature>
<feature type="strand" evidence="3">
    <location>
        <begin position="34"/>
        <end position="36"/>
    </location>
</feature>
<feature type="strand" evidence="3">
    <location>
        <begin position="38"/>
        <end position="42"/>
    </location>
</feature>
<feature type="strand" evidence="3">
    <location>
        <begin position="44"/>
        <end position="46"/>
    </location>
</feature>
<feature type="strand" evidence="3">
    <location>
        <begin position="64"/>
        <end position="68"/>
    </location>
</feature>
<feature type="helix" evidence="3">
    <location>
        <begin position="77"/>
        <end position="82"/>
    </location>
</feature>
<feature type="strand" evidence="3">
    <location>
        <begin position="95"/>
        <end position="99"/>
    </location>
</feature>
<feature type="strand" evidence="3">
    <location>
        <begin position="108"/>
        <end position="110"/>
    </location>
</feature>
<feature type="helix" evidence="3">
    <location>
        <begin position="114"/>
        <end position="116"/>
    </location>
</feature>
<feature type="helix" evidence="3">
    <location>
        <begin position="119"/>
        <end position="121"/>
    </location>
</feature>
<feature type="helix" evidence="3">
    <location>
        <begin position="122"/>
        <end position="126"/>
    </location>
</feature>
<feature type="strand" evidence="3">
    <location>
        <begin position="129"/>
        <end position="134"/>
    </location>
</feature>
<feature type="turn" evidence="3">
    <location>
        <begin position="142"/>
        <end position="144"/>
    </location>
</feature>
<feature type="strand" evidence="3">
    <location>
        <begin position="145"/>
        <end position="148"/>
    </location>
</feature>
<feature type="strand" evidence="3">
    <location>
        <begin position="150"/>
        <end position="152"/>
    </location>
</feature>
<feature type="strand" evidence="3">
    <location>
        <begin position="155"/>
        <end position="159"/>
    </location>
</feature>
<feature type="strand" evidence="3">
    <location>
        <begin position="171"/>
        <end position="176"/>
    </location>
</feature>
<feature type="helix" evidence="4">
    <location>
        <begin position="178"/>
        <end position="180"/>
    </location>
</feature>
<feature type="strand" evidence="3">
    <location>
        <begin position="187"/>
        <end position="191"/>
    </location>
</feature>
<feature type="strand" evidence="3">
    <location>
        <begin position="200"/>
        <end position="209"/>
    </location>
</feature>
<feature type="helix" evidence="3">
    <location>
        <begin position="212"/>
        <end position="219"/>
    </location>
</feature>
<feature type="strand" evidence="3">
    <location>
        <begin position="226"/>
        <end position="231"/>
    </location>
</feature>
<feature type="strand" evidence="3">
    <location>
        <begin position="234"/>
        <end position="239"/>
    </location>
</feature>
<feature type="strand" evidence="3">
    <location>
        <begin position="259"/>
        <end position="267"/>
    </location>
</feature>
<feature type="strand" evidence="3">
    <location>
        <begin position="273"/>
        <end position="277"/>
    </location>
</feature>
<feature type="strand" evidence="3">
    <location>
        <begin position="281"/>
        <end position="284"/>
    </location>
</feature>
<feature type="strand" evidence="3">
    <location>
        <begin position="288"/>
        <end position="292"/>
    </location>
</feature>
<feature type="strand" evidence="3">
    <location>
        <begin position="295"/>
        <end position="298"/>
    </location>
</feature>
<feature type="strand" evidence="3">
    <location>
        <begin position="305"/>
        <end position="311"/>
    </location>
</feature>
<feature type="turn" evidence="3">
    <location>
        <begin position="312"/>
        <end position="314"/>
    </location>
</feature>
<feature type="strand" evidence="3">
    <location>
        <begin position="315"/>
        <end position="317"/>
    </location>
</feature>
<feature type="strand" evidence="3">
    <location>
        <begin position="321"/>
        <end position="324"/>
    </location>
</feature>
<feature type="strand" evidence="3">
    <location>
        <begin position="331"/>
        <end position="334"/>
    </location>
</feature>
<feature type="strand" evidence="3">
    <location>
        <begin position="344"/>
        <end position="346"/>
    </location>
</feature>
<feature type="helix" evidence="3">
    <location>
        <begin position="363"/>
        <end position="368"/>
    </location>
</feature>
<feature type="strand" evidence="3">
    <location>
        <begin position="373"/>
        <end position="375"/>
    </location>
</feature>
<feature type="strand" evidence="3">
    <location>
        <begin position="382"/>
        <end position="389"/>
    </location>
</feature>
<feature type="strand" evidence="3">
    <location>
        <begin position="392"/>
        <end position="397"/>
    </location>
</feature>
<feature type="helix" evidence="3">
    <location>
        <begin position="399"/>
        <end position="417"/>
    </location>
</feature>
<feature type="turn" evidence="3">
    <location>
        <begin position="432"/>
        <end position="435"/>
    </location>
</feature>
<feature type="helix" evidence="3">
    <location>
        <begin position="436"/>
        <end position="470"/>
    </location>
</feature>
<feature type="helix" evidence="3">
    <location>
        <begin position="472"/>
        <end position="487"/>
    </location>
</feature>
<feature type="strand" evidence="3">
    <location>
        <begin position="491"/>
        <end position="493"/>
    </location>
</feature>
<feature type="strand" evidence="3">
    <location>
        <begin position="495"/>
        <end position="500"/>
    </location>
</feature>
<feature type="helix" evidence="3">
    <location>
        <begin position="507"/>
        <end position="514"/>
    </location>
</feature>
<feature type="helix" evidence="3">
    <location>
        <begin position="520"/>
        <end position="523"/>
    </location>
</feature>
<reference key="1">
    <citation type="journal article" date="1983" name="Proc. Natl. Acad. Sci. U.S.A.">
        <title>Sequential mutations in hemagglutinins of influenza B virus isolates: definition of antigenic domains.</title>
        <authorList>
            <person name="Krystal M."/>
            <person name="Young J.F."/>
            <person name="Palese P."/>
            <person name="Wilson I.A."/>
            <person name="Skehel J.J."/>
            <person name="Wiley D.C."/>
        </authorList>
    </citation>
    <scope>NUCLEOTIDE SEQUENCE [GENOMIC RNA]</scope>
</reference>
<reference key="2">
    <citation type="journal article" date="1984" name="Proc. Natl. Acad. Sci. U.S.A.">
        <authorList>
            <person name="Krystal M."/>
            <person name="Young J.F."/>
            <person name="Palese P."/>
            <person name="Wilson I.A."/>
            <person name="Skehel J.J."/>
            <person name="Wiley D.C."/>
        </authorList>
    </citation>
    <scope>ERRATUM OF PUBMED:6192436</scope>
    <scope>SEQUENCE REVISION</scope>
</reference>
<accession>P03460</accession>
<organismHost>
    <name type="scientific">Homo sapiens</name>
    <name type="common">Human</name>
    <dbReference type="NCBI Taxonomy" id="9606"/>
</organismHost>
<comment type="function">
    <text evidence="1">Binds to sialic acid-containing receptors on the cell surface, bringing about the attachment of the virus particle to the cell. Plays a major role in the determination of host range restriction and virulence. Class I viral fusion protein. Responsible for penetration of the virus into the cell cytoplasm by mediating the fusion of the membrane of the endocytosed virus particle with the endosomal membrane. Low pH in endosomes induce an irreversible conformational change in HA2, releasing the fusion hydrophobic peptide. Several trimers are required to form a competent fusion pore.</text>
</comment>
<comment type="subunit">
    <text evidence="1">Homotrimer of disulfide-linked HA1-HA2.</text>
</comment>
<comment type="subcellular location">
    <subcellularLocation>
        <location evidence="1 2">Virion membrane</location>
        <topology evidence="1 2">Single-pass type I membrane protein</topology>
    </subcellularLocation>
    <subcellularLocation>
        <location evidence="1">Host apical cell membrane</location>
        <topology evidence="1 2">Single-pass type I membrane protein</topology>
    </subcellularLocation>
    <text evidence="1">Targeted to the apical plasma membrane in epithelial polarized cells through a signal present in the transmembrane domain. Associated with glycosphingolipid- and cholesterol-enriched detergent-resistant lipid rafts.</text>
</comment>
<comment type="PTM">
    <text evidence="1">Palmitoylated.</text>
</comment>
<comment type="PTM">
    <text evidence="1">In natural infection, inactive HA is matured into HA1 and HA2 outside the cell by one or more trypsin-like, arginine-specific endoprotease secreted by the bronchial epithelial cells. One identified protease that may be involved in this process is secreted in lungs by club cells.</text>
</comment>
<comment type="miscellaneous">
    <text>Major glycoprotein, comprises over 80% of the envelope proteins present in virus particle.</text>
</comment>
<comment type="miscellaneous">
    <text>The extent of infection into host organism is determined by HA. Influenza viruses bud from the apical surface of polarized epithelial cells (e.g. bronchial epithelial cells) into lumen of lungs and are therefore usually pneumotropic. The reason is that HA is cleaved by tryptase clara which is restricted to lungs. However, HAs of H5 and H7 pantropic avian viruses subtypes can be cleaved by furin and subtilisin-type enzymes, allowing the virus to grow in other organs than lungs.</text>
</comment>
<comment type="miscellaneous">
    <text evidence="2">The influenza B genome consist of 8 RNA segments. Genetic variation of hemagglutinin and/or neuraminidase genes results in the emergence of new influenza strains. The mechanism of variation can be the result of point mutations or the result of genetic reassortment between segments of two different strains.</text>
</comment>
<comment type="similarity">
    <text evidence="1">Belongs to the influenza viruses hemagglutinin family.</text>
</comment>
<sequence length="584" mass="63275">MKAIIVLLMVVTSNADRICTGITSSNSPHVVKTATQGEVNVTGVIPLTTTPTKSHFANLKGTQTRGKLCPNCFNCTDLDVALGRPKCMGNTPSAKVSILHEVKPATSGCFPIMHDRTKIRQLPNLLRGYENIRLSTSNVINTETAPGGPYKVGTSGSCPNVANGNGFFNTMAWVIPKDNNKTAINPVTVEVPYICSEGEDQITVWGFHSDDKTQMERLYGDSNPQKFTSSANGVTTHYVSQIGGFPNQTEDEGLKQSGRIVVDYMVQKPGKTGTIVYQRGILLPQKVWCASGRSKVIKGSLPLIGEADCLHEKYGGLNKSKPYYTGEHAKAIGNCPIWVKTPLKLANGTKYRPPAKLLKERGFFGAIAGFLEGGWEGMIAGWHGYTSHGAHGVAVAADLKSTQEAINKITKNLNYLSELEVKNLQRLSGAMNELHDEILELDEKVDDLRADTISSQIELAVLLSNEGIINSEDEHLLALERKLKKMLGPSAVEIGNGCFETKHKCNQTCLDRIAAGTFNAGDFSLPTFDSLNITAASLNDDGLDNHTILLYYSTAASSLAVTLMIAIFIVYMVSRDNVSCSICL</sequence>
<protein>
    <recommendedName>
        <fullName evidence="1">Hemagglutinin</fullName>
    </recommendedName>
    <component>
        <recommendedName>
            <fullName evidence="1">Hemagglutinin HA1 chain</fullName>
        </recommendedName>
    </component>
    <component>
        <recommendedName>
            <fullName evidence="1">Hemagglutinin HA2 chain</fullName>
        </recommendedName>
    </component>
</protein>